<protein>
    <recommendedName>
        <fullName evidence="2">Formamidopyrimidine-DNA glycosylase</fullName>
        <shortName evidence="2">Fapy-DNA glycosylase</shortName>
        <ecNumber evidence="2">3.2.2.23</ecNumber>
    </recommendedName>
    <alternativeName>
        <fullName evidence="2">DNA-(apurinic or apyrimidinic site) lyase MutM</fullName>
        <shortName evidence="2">AP lyase MutM</shortName>
        <ecNumber evidence="2">4.2.99.18</ecNumber>
    </alternativeName>
</protein>
<proteinExistence type="inferred from homology"/>
<name>FPG_ECOLC</name>
<reference key="1">
    <citation type="submission" date="2008-02" db="EMBL/GenBank/DDBJ databases">
        <title>Complete sequence of Escherichia coli C str. ATCC 8739.</title>
        <authorList>
            <person name="Copeland A."/>
            <person name="Lucas S."/>
            <person name="Lapidus A."/>
            <person name="Glavina del Rio T."/>
            <person name="Dalin E."/>
            <person name="Tice H."/>
            <person name="Bruce D."/>
            <person name="Goodwin L."/>
            <person name="Pitluck S."/>
            <person name="Kiss H."/>
            <person name="Brettin T."/>
            <person name="Detter J.C."/>
            <person name="Han C."/>
            <person name="Kuske C.R."/>
            <person name="Schmutz J."/>
            <person name="Larimer F."/>
            <person name="Land M."/>
            <person name="Hauser L."/>
            <person name="Kyrpides N."/>
            <person name="Mikhailova N."/>
            <person name="Ingram L."/>
            <person name="Richardson P."/>
        </authorList>
    </citation>
    <scope>NUCLEOTIDE SEQUENCE [LARGE SCALE GENOMIC DNA]</scope>
    <source>
        <strain>ATCC 8739 / DSM 1576 / NBRC 3972 / NCIMB 8545 / WDCM 00012 / Crooks</strain>
    </source>
</reference>
<dbReference type="EC" id="3.2.2.23" evidence="2"/>
<dbReference type="EC" id="4.2.99.18" evidence="2"/>
<dbReference type="EMBL" id="CP000946">
    <property type="protein sequence ID" value="ACA75762.1"/>
    <property type="molecule type" value="Genomic_DNA"/>
</dbReference>
<dbReference type="RefSeq" id="WP_001114533.1">
    <property type="nucleotide sequence ID" value="NZ_MTFT01000034.1"/>
</dbReference>
<dbReference type="SMR" id="B1IZF8"/>
<dbReference type="GeneID" id="93778348"/>
<dbReference type="KEGG" id="ecl:EcolC_0076"/>
<dbReference type="HOGENOM" id="CLU_038423_1_1_6"/>
<dbReference type="GO" id="GO:0034039">
    <property type="term" value="F:8-oxo-7,8-dihydroguanine DNA N-glycosylase activity"/>
    <property type="evidence" value="ECO:0007669"/>
    <property type="project" value="TreeGrafter"/>
</dbReference>
<dbReference type="GO" id="GO:0140078">
    <property type="term" value="F:class I DNA-(apurinic or apyrimidinic site) endonuclease activity"/>
    <property type="evidence" value="ECO:0007669"/>
    <property type="project" value="UniProtKB-EC"/>
</dbReference>
<dbReference type="GO" id="GO:0003684">
    <property type="term" value="F:damaged DNA binding"/>
    <property type="evidence" value="ECO:0007669"/>
    <property type="project" value="InterPro"/>
</dbReference>
<dbReference type="GO" id="GO:0008270">
    <property type="term" value="F:zinc ion binding"/>
    <property type="evidence" value="ECO:0007669"/>
    <property type="project" value="UniProtKB-UniRule"/>
</dbReference>
<dbReference type="GO" id="GO:0006284">
    <property type="term" value="P:base-excision repair"/>
    <property type="evidence" value="ECO:0007669"/>
    <property type="project" value="InterPro"/>
</dbReference>
<dbReference type="CDD" id="cd08966">
    <property type="entry name" value="EcFpg-like_N"/>
    <property type="match status" value="1"/>
</dbReference>
<dbReference type="FunFam" id="1.10.8.50:FF:000003">
    <property type="entry name" value="Formamidopyrimidine-DNA glycosylase"/>
    <property type="match status" value="1"/>
</dbReference>
<dbReference type="FunFam" id="3.20.190.10:FF:000001">
    <property type="entry name" value="Formamidopyrimidine-DNA glycosylase"/>
    <property type="match status" value="1"/>
</dbReference>
<dbReference type="Gene3D" id="1.10.8.50">
    <property type="match status" value="1"/>
</dbReference>
<dbReference type="Gene3D" id="3.20.190.10">
    <property type="entry name" value="MutM-like, N-terminal"/>
    <property type="match status" value="1"/>
</dbReference>
<dbReference type="HAMAP" id="MF_00103">
    <property type="entry name" value="Fapy_DNA_glycosyl"/>
    <property type="match status" value="1"/>
</dbReference>
<dbReference type="InterPro" id="IPR015886">
    <property type="entry name" value="DNA_glyclase/AP_lyase_DNA-bd"/>
</dbReference>
<dbReference type="InterPro" id="IPR015887">
    <property type="entry name" value="DNA_glyclase_Znf_dom_DNA_BS"/>
</dbReference>
<dbReference type="InterPro" id="IPR020629">
    <property type="entry name" value="Formamido-pyr_DNA_Glyclase"/>
</dbReference>
<dbReference type="InterPro" id="IPR012319">
    <property type="entry name" value="FPG_cat"/>
</dbReference>
<dbReference type="InterPro" id="IPR035937">
    <property type="entry name" value="MutM-like_N-ter"/>
</dbReference>
<dbReference type="InterPro" id="IPR010979">
    <property type="entry name" value="Ribosomal_uS13-like_H2TH"/>
</dbReference>
<dbReference type="InterPro" id="IPR000214">
    <property type="entry name" value="Znf_DNA_glyclase/AP_lyase"/>
</dbReference>
<dbReference type="InterPro" id="IPR010663">
    <property type="entry name" value="Znf_FPG/IleRS"/>
</dbReference>
<dbReference type="NCBIfam" id="TIGR00577">
    <property type="entry name" value="fpg"/>
    <property type="match status" value="1"/>
</dbReference>
<dbReference type="NCBIfam" id="NF002211">
    <property type="entry name" value="PRK01103.1"/>
    <property type="match status" value="1"/>
</dbReference>
<dbReference type="PANTHER" id="PTHR22993">
    <property type="entry name" value="FORMAMIDOPYRIMIDINE-DNA GLYCOSYLASE"/>
    <property type="match status" value="1"/>
</dbReference>
<dbReference type="PANTHER" id="PTHR22993:SF9">
    <property type="entry name" value="FORMAMIDOPYRIMIDINE-DNA GLYCOSYLASE"/>
    <property type="match status" value="1"/>
</dbReference>
<dbReference type="Pfam" id="PF01149">
    <property type="entry name" value="Fapy_DNA_glyco"/>
    <property type="match status" value="1"/>
</dbReference>
<dbReference type="Pfam" id="PF06831">
    <property type="entry name" value="H2TH"/>
    <property type="match status" value="1"/>
</dbReference>
<dbReference type="Pfam" id="PF06827">
    <property type="entry name" value="zf-FPG_IleRS"/>
    <property type="match status" value="1"/>
</dbReference>
<dbReference type="SMART" id="SM00898">
    <property type="entry name" value="Fapy_DNA_glyco"/>
    <property type="match status" value="1"/>
</dbReference>
<dbReference type="SMART" id="SM01232">
    <property type="entry name" value="H2TH"/>
    <property type="match status" value="1"/>
</dbReference>
<dbReference type="SUPFAM" id="SSF57716">
    <property type="entry name" value="Glucocorticoid receptor-like (DNA-binding domain)"/>
    <property type="match status" value="1"/>
</dbReference>
<dbReference type="SUPFAM" id="SSF81624">
    <property type="entry name" value="N-terminal domain of MutM-like DNA repair proteins"/>
    <property type="match status" value="1"/>
</dbReference>
<dbReference type="SUPFAM" id="SSF46946">
    <property type="entry name" value="S13-like H2TH domain"/>
    <property type="match status" value="1"/>
</dbReference>
<dbReference type="PROSITE" id="PS51068">
    <property type="entry name" value="FPG_CAT"/>
    <property type="match status" value="1"/>
</dbReference>
<dbReference type="PROSITE" id="PS01242">
    <property type="entry name" value="ZF_FPG_1"/>
    <property type="match status" value="1"/>
</dbReference>
<dbReference type="PROSITE" id="PS51066">
    <property type="entry name" value="ZF_FPG_2"/>
    <property type="match status" value="1"/>
</dbReference>
<organism>
    <name type="scientific">Escherichia coli (strain ATCC 8739 / DSM 1576 / NBRC 3972 / NCIMB 8545 / WDCM 00012 / Crooks)</name>
    <dbReference type="NCBI Taxonomy" id="481805"/>
    <lineage>
        <taxon>Bacteria</taxon>
        <taxon>Pseudomonadati</taxon>
        <taxon>Pseudomonadota</taxon>
        <taxon>Gammaproteobacteria</taxon>
        <taxon>Enterobacterales</taxon>
        <taxon>Enterobacteriaceae</taxon>
        <taxon>Escherichia</taxon>
    </lineage>
</organism>
<keyword id="KW-0227">DNA damage</keyword>
<keyword id="KW-0234">DNA repair</keyword>
<keyword id="KW-0238">DNA-binding</keyword>
<keyword id="KW-0326">Glycosidase</keyword>
<keyword id="KW-0378">Hydrolase</keyword>
<keyword id="KW-0456">Lyase</keyword>
<keyword id="KW-0479">Metal-binding</keyword>
<keyword id="KW-0511">Multifunctional enzyme</keyword>
<keyword id="KW-0862">Zinc</keyword>
<keyword id="KW-0863">Zinc-finger</keyword>
<sequence length="269" mass="30260">MPELPEVETSRRGIEPHLVGATILHAVVRNGRLRWPVSEEIYRLSDQPVLSVQRRAKYLLLELPEGWIIIHLGMSGSLRILPEELPPEKHDHVDLVMSNGKVLRYTDPRRFGAWLWTKELEGHNVLAHLGPEPLSDDFNGEYLHQKCAKKKTAIKPWLMDNKLVVGVGNIYASESLFAAGIHPDRLASSLSLAECELLARVIKAVLLRSIEQGGTTLKDFLQSDGKPGYFAQELQVYGRKGEPCRVCGTPIVATKHAQRATFYCRQCQK</sequence>
<comment type="function">
    <text evidence="2">Involved in base excision repair of DNA damaged by oxidation or by mutagenic agents. Acts as a DNA glycosylase that recognizes and removes damaged bases. Has a preference for oxidized purines, such as 7,8-dihydro-8-oxoguanine (8-oxoG). Has AP (apurinic/apyrimidinic) lyase activity and introduces nicks in the DNA strand. Cleaves the DNA backbone by beta-delta elimination to generate a single-strand break at the site of the removed base with both 3'- and 5'-phosphates.</text>
</comment>
<comment type="catalytic activity">
    <reaction evidence="2">
        <text>Hydrolysis of DNA containing ring-opened 7-methylguanine residues, releasing 2,6-diamino-4-hydroxy-5-(N-methyl)formamidopyrimidine.</text>
        <dbReference type="EC" id="3.2.2.23"/>
    </reaction>
</comment>
<comment type="catalytic activity">
    <reaction evidence="2">
        <text>2'-deoxyribonucleotide-(2'-deoxyribose 5'-phosphate)-2'-deoxyribonucleotide-DNA = a 3'-end 2'-deoxyribonucleotide-(2,3-dehydro-2,3-deoxyribose 5'-phosphate)-DNA + a 5'-end 5'-phospho-2'-deoxyribonucleoside-DNA + H(+)</text>
        <dbReference type="Rhea" id="RHEA:66592"/>
        <dbReference type="Rhea" id="RHEA-COMP:13180"/>
        <dbReference type="Rhea" id="RHEA-COMP:16897"/>
        <dbReference type="Rhea" id="RHEA-COMP:17067"/>
        <dbReference type="ChEBI" id="CHEBI:15378"/>
        <dbReference type="ChEBI" id="CHEBI:136412"/>
        <dbReference type="ChEBI" id="CHEBI:157695"/>
        <dbReference type="ChEBI" id="CHEBI:167181"/>
        <dbReference type="EC" id="4.2.99.18"/>
    </reaction>
</comment>
<comment type="cofactor">
    <cofactor evidence="2">
        <name>Zn(2+)</name>
        <dbReference type="ChEBI" id="CHEBI:29105"/>
    </cofactor>
    <text evidence="2">Binds 1 zinc ion per subunit.</text>
</comment>
<comment type="subunit">
    <text evidence="2">Monomer.</text>
</comment>
<comment type="similarity">
    <text evidence="2">Belongs to the FPG family.</text>
</comment>
<evidence type="ECO:0000250" key="1"/>
<evidence type="ECO:0000255" key="2">
    <source>
        <dbReference type="HAMAP-Rule" id="MF_00103"/>
    </source>
</evidence>
<feature type="initiator methionine" description="Removed" evidence="1">
    <location>
        <position position="1"/>
    </location>
</feature>
<feature type="chain" id="PRO_1000075697" description="Formamidopyrimidine-DNA glycosylase">
    <location>
        <begin position="2"/>
        <end position="269"/>
    </location>
</feature>
<feature type="zinc finger region" description="FPG-type" evidence="2">
    <location>
        <begin position="235"/>
        <end position="269"/>
    </location>
</feature>
<feature type="active site" description="Schiff-base intermediate with DNA" evidence="2">
    <location>
        <position position="2"/>
    </location>
</feature>
<feature type="active site" description="Proton donor" evidence="2">
    <location>
        <position position="3"/>
    </location>
</feature>
<feature type="active site" description="Proton donor; for beta-elimination activity" evidence="2">
    <location>
        <position position="57"/>
    </location>
</feature>
<feature type="active site" description="Proton donor; for delta-elimination activity" evidence="2">
    <location>
        <position position="259"/>
    </location>
</feature>
<feature type="binding site" evidence="2">
    <location>
        <position position="90"/>
    </location>
    <ligand>
        <name>DNA</name>
        <dbReference type="ChEBI" id="CHEBI:16991"/>
    </ligand>
</feature>
<feature type="binding site" evidence="2">
    <location>
        <position position="109"/>
    </location>
    <ligand>
        <name>DNA</name>
        <dbReference type="ChEBI" id="CHEBI:16991"/>
    </ligand>
</feature>
<feature type="binding site" evidence="2">
    <location>
        <position position="150"/>
    </location>
    <ligand>
        <name>DNA</name>
        <dbReference type="ChEBI" id="CHEBI:16991"/>
    </ligand>
</feature>
<accession>B1IZF8</accession>
<gene>
    <name evidence="2" type="primary">mutM</name>
    <name evidence="2" type="synonym">fpg</name>
    <name type="ordered locus">EcolC_0076</name>
</gene>